<protein>
    <recommendedName>
        <fullName>Putative uncharacterized protein YDR537C</fullName>
    </recommendedName>
</protein>
<reference key="1">
    <citation type="journal article" date="1997" name="Nature">
        <title>The nucleotide sequence of Saccharomyces cerevisiae chromosome IV.</title>
        <authorList>
            <person name="Jacq C."/>
            <person name="Alt-Moerbe J."/>
            <person name="Andre B."/>
            <person name="Arnold W."/>
            <person name="Bahr A."/>
            <person name="Ballesta J.P.G."/>
            <person name="Bargues M."/>
            <person name="Baron L."/>
            <person name="Becker A."/>
            <person name="Biteau N."/>
            <person name="Bloecker H."/>
            <person name="Blugeon C."/>
            <person name="Boskovic J."/>
            <person name="Brandt P."/>
            <person name="Brueckner M."/>
            <person name="Buitrago M.J."/>
            <person name="Coster F."/>
            <person name="Delaveau T."/>
            <person name="del Rey F."/>
            <person name="Dujon B."/>
            <person name="Eide L.G."/>
            <person name="Garcia-Cantalejo J.M."/>
            <person name="Goffeau A."/>
            <person name="Gomez-Peris A."/>
            <person name="Granotier C."/>
            <person name="Hanemann V."/>
            <person name="Hankeln T."/>
            <person name="Hoheisel J.D."/>
            <person name="Jaeger W."/>
            <person name="Jimenez A."/>
            <person name="Jonniaux J.-L."/>
            <person name="Kraemer C."/>
            <person name="Kuester H."/>
            <person name="Laamanen P."/>
            <person name="Legros Y."/>
            <person name="Louis E.J."/>
            <person name="Moeller-Rieker S."/>
            <person name="Monnet A."/>
            <person name="Moro M."/>
            <person name="Mueller-Auer S."/>
            <person name="Nussbaumer B."/>
            <person name="Paricio N."/>
            <person name="Paulin L."/>
            <person name="Perea J."/>
            <person name="Perez-Alonso M."/>
            <person name="Perez-Ortin J.E."/>
            <person name="Pohl T.M."/>
            <person name="Prydz H."/>
            <person name="Purnelle B."/>
            <person name="Rasmussen S.W."/>
            <person name="Remacha M.A."/>
            <person name="Revuelta J.L."/>
            <person name="Rieger M."/>
            <person name="Salom D."/>
            <person name="Saluz H.P."/>
            <person name="Saiz J.E."/>
            <person name="Saren A.-M."/>
            <person name="Schaefer M."/>
            <person name="Scharfe M."/>
            <person name="Schmidt E.R."/>
            <person name="Schneider C."/>
            <person name="Scholler P."/>
            <person name="Schwarz S."/>
            <person name="Soler-Mira A."/>
            <person name="Urrestarazu L.A."/>
            <person name="Verhasselt P."/>
            <person name="Vissers S."/>
            <person name="Voet M."/>
            <person name="Volckaert G."/>
            <person name="Wagner G."/>
            <person name="Wambutt R."/>
            <person name="Wedler E."/>
            <person name="Wedler H."/>
            <person name="Woelfl S."/>
            <person name="Harris D.E."/>
            <person name="Bowman S."/>
            <person name="Brown D."/>
            <person name="Churcher C.M."/>
            <person name="Connor R."/>
            <person name="Dedman K."/>
            <person name="Gentles S."/>
            <person name="Hamlin N."/>
            <person name="Hunt S."/>
            <person name="Jones L."/>
            <person name="McDonald S."/>
            <person name="Murphy L.D."/>
            <person name="Niblett D."/>
            <person name="Odell C."/>
            <person name="Oliver K."/>
            <person name="Rajandream M.A."/>
            <person name="Richards C."/>
            <person name="Shore L."/>
            <person name="Walsh S.V."/>
            <person name="Barrell B.G."/>
            <person name="Dietrich F.S."/>
            <person name="Mulligan J.T."/>
            <person name="Allen E."/>
            <person name="Araujo R."/>
            <person name="Aviles E."/>
            <person name="Berno A."/>
            <person name="Carpenter J."/>
            <person name="Chen E."/>
            <person name="Cherry J.M."/>
            <person name="Chung E."/>
            <person name="Duncan M."/>
            <person name="Hunicke-Smith S."/>
            <person name="Hyman R.W."/>
            <person name="Komp C."/>
            <person name="Lashkari D."/>
            <person name="Lew H."/>
            <person name="Lin D."/>
            <person name="Mosedale D."/>
            <person name="Nakahara K."/>
            <person name="Namath A."/>
            <person name="Oefner P."/>
            <person name="Oh C."/>
            <person name="Petel F.X."/>
            <person name="Roberts D."/>
            <person name="Schramm S."/>
            <person name="Schroeder M."/>
            <person name="Shogren T."/>
            <person name="Shroff N."/>
            <person name="Winant A."/>
            <person name="Yelton M.A."/>
            <person name="Botstein D."/>
            <person name="Davis R.W."/>
            <person name="Johnston M."/>
            <person name="Andrews S."/>
            <person name="Brinkman R."/>
            <person name="Cooper J."/>
            <person name="Ding H."/>
            <person name="Du Z."/>
            <person name="Favello A."/>
            <person name="Fulton L."/>
            <person name="Gattung S."/>
            <person name="Greco T."/>
            <person name="Hallsworth K."/>
            <person name="Hawkins J."/>
            <person name="Hillier L.W."/>
            <person name="Jier M."/>
            <person name="Johnson D."/>
            <person name="Johnston L."/>
            <person name="Kirsten J."/>
            <person name="Kucaba T."/>
            <person name="Langston Y."/>
            <person name="Latreille P."/>
            <person name="Le T."/>
            <person name="Mardis E."/>
            <person name="Menezes S."/>
            <person name="Miller N."/>
            <person name="Nhan M."/>
            <person name="Pauley A."/>
            <person name="Peluso D."/>
            <person name="Rifkin L."/>
            <person name="Riles L."/>
            <person name="Taich A."/>
            <person name="Trevaskis E."/>
            <person name="Vignati D."/>
            <person name="Wilcox L."/>
            <person name="Wohldman P."/>
            <person name="Vaudin M."/>
            <person name="Wilson R."/>
            <person name="Waterston R."/>
            <person name="Albermann K."/>
            <person name="Hani J."/>
            <person name="Heumann K."/>
            <person name="Kleine K."/>
            <person name="Mewes H.-W."/>
            <person name="Zollner A."/>
            <person name="Zaccaria P."/>
        </authorList>
    </citation>
    <scope>NUCLEOTIDE SEQUENCE [LARGE SCALE GENOMIC DNA]</scope>
    <source>
        <strain>ATCC 204508 / S288c</strain>
    </source>
</reference>
<reference key="2">
    <citation type="journal article" date="2014" name="G3 (Bethesda)">
        <title>The reference genome sequence of Saccharomyces cerevisiae: Then and now.</title>
        <authorList>
            <person name="Engel S.R."/>
            <person name="Dietrich F.S."/>
            <person name="Fisk D.G."/>
            <person name="Binkley G."/>
            <person name="Balakrishnan R."/>
            <person name="Costanzo M.C."/>
            <person name="Dwight S.S."/>
            <person name="Hitz B.C."/>
            <person name="Karra K."/>
            <person name="Nash R.S."/>
            <person name="Weng S."/>
            <person name="Wong E.D."/>
            <person name="Lloyd P."/>
            <person name="Skrzypek M.S."/>
            <person name="Miyasato S.R."/>
            <person name="Simison M."/>
            <person name="Cherry J.M."/>
        </authorList>
    </citation>
    <scope>GENOME REANNOTATION</scope>
    <source>
        <strain>ATCC 204508 / S288c</strain>
    </source>
</reference>
<reference key="3">
    <citation type="journal article" date="2007" name="Genome Res.">
        <title>Approaching a complete repository of sequence-verified protein-encoding clones for Saccharomyces cerevisiae.</title>
        <authorList>
            <person name="Hu Y."/>
            <person name="Rolfs A."/>
            <person name="Bhullar B."/>
            <person name="Murthy T.V.S."/>
            <person name="Zhu C."/>
            <person name="Berger M.F."/>
            <person name="Camargo A.A."/>
            <person name="Kelley F."/>
            <person name="McCarron S."/>
            <person name="Jepson D."/>
            <person name="Richardson A."/>
            <person name="Raphael J."/>
            <person name="Moreira D."/>
            <person name="Taycher E."/>
            <person name="Zuo D."/>
            <person name="Mohr S."/>
            <person name="Kane M.F."/>
            <person name="Williamson J."/>
            <person name="Simpson A.J.G."/>
            <person name="Bulyk M.L."/>
            <person name="Harlow E."/>
            <person name="Marsischky G."/>
            <person name="Kolodner R.D."/>
            <person name="LaBaer J."/>
        </authorList>
    </citation>
    <scope>NUCLEOTIDE SEQUENCE [GENOMIC DNA]</scope>
    <source>
        <strain>ATCC 204508 / S288c</strain>
    </source>
</reference>
<name>YD537_YEAST</name>
<evidence type="ECO:0000305" key="1"/>
<evidence type="ECO:0000305" key="2">
    <source>
    </source>
</evidence>
<accession>P87261</accession>
<dbReference type="EMBL" id="U43834">
    <property type="protein sequence ID" value="AAB64988.1"/>
    <property type="molecule type" value="Genomic_DNA"/>
</dbReference>
<dbReference type="EMBL" id="AY693262">
    <property type="protein sequence ID" value="AAT93281.1"/>
    <property type="molecule type" value="Genomic_DNA"/>
</dbReference>
<dbReference type="PIR" id="S69748">
    <property type="entry name" value="S69748"/>
</dbReference>
<dbReference type="PaxDb" id="4932-YDR537C"/>
<dbReference type="EnsemblFungi" id="YDR537C_mRNA">
    <property type="protein sequence ID" value="YDR537C"/>
    <property type="gene ID" value="YDR537C"/>
</dbReference>
<dbReference type="AGR" id="SGD:S000002945"/>
<dbReference type="SGD" id="S000002945">
    <property type="gene designation" value="YDR537C"/>
</dbReference>
<dbReference type="HOGENOM" id="CLU_117801_0_0_1"/>
<dbReference type="OMA" id="TIIPSCW"/>
<comment type="miscellaneous">
    <text evidence="1">Partially overlaps PAD1.</text>
</comment>
<comment type="caution">
    <text evidence="2">Product of a dubious gene prediction unlikely to encode a functional protein. Because of that it is not part of the S.cerevisiae S288c complete/reference proteome set.</text>
</comment>
<feature type="chain" id="PRO_0000299905" description="Putative uncharacterized protein YDR537C">
    <location>
        <begin position="1"/>
        <end position="201"/>
    </location>
</feature>
<organism>
    <name type="scientific">Saccharomyces cerevisiae (strain ATCC 204508 / S288c)</name>
    <name type="common">Baker's yeast</name>
    <dbReference type="NCBI Taxonomy" id="559292"/>
    <lineage>
        <taxon>Eukaryota</taxon>
        <taxon>Fungi</taxon>
        <taxon>Dikarya</taxon>
        <taxon>Ascomycota</taxon>
        <taxon>Saccharomycotina</taxon>
        <taxon>Saccharomycetes</taxon>
        <taxon>Saccharomycetales</taxon>
        <taxon>Saccharomycetaceae</taxon>
        <taxon>Saccharomyces</taxon>
    </lineage>
</organism>
<proteinExistence type="uncertain"/>
<gene>
    <name type="ordered locus">YDR537C</name>
</gene>
<sequence length="201" mass="21658">MFSRWMEDKGVSRVTSSNLRFSLIETSAALVIKSSVKPILIAASDFMEQGTTIIPSCWKDPDEMHAETSRTEYVLVAKAATSCGSQSVSYFIVAAPHFEITKWVSTLNSFSTCRSLIPSATPVAPVIATTILFGLGGEVDALVTSFDSLCVRKDGEVVMVLPSKGKLAKMPVVLKKAILVLLGNRSISTQLKLLNALDSVD</sequence>